<protein>
    <recommendedName>
        <fullName evidence="1">Maltose/maltodextrin import ATP-binding protein MalK</fullName>
        <ecNumber evidence="1">7.5.2.1</ecNumber>
    </recommendedName>
</protein>
<organism>
    <name type="scientific">Photorhabdus luminescens</name>
    <name type="common">Xenorhabdus luminescens</name>
    <dbReference type="NCBI Taxonomy" id="29488"/>
    <lineage>
        <taxon>Bacteria</taxon>
        <taxon>Pseudomonadati</taxon>
        <taxon>Pseudomonadota</taxon>
        <taxon>Gammaproteobacteria</taxon>
        <taxon>Enterobacterales</taxon>
        <taxon>Morganellaceae</taxon>
        <taxon>Photorhabdus</taxon>
    </lineage>
</organism>
<keyword id="KW-0067">ATP-binding</keyword>
<keyword id="KW-0997">Cell inner membrane</keyword>
<keyword id="KW-1003">Cell membrane</keyword>
<keyword id="KW-0472">Membrane</keyword>
<keyword id="KW-0547">Nucleotide-binding</keyword>
<keyword id="KW-0762">Sugar transport</keyword>
<keyword id="KW-1278">Translocase</keyword>
<keyword id="KW-0813">Transport</keyword>
<sequence>MSSVTLRNVSKAYGETIISKNINLEIQEGEF</sequence>
<accession>P41124</accession>
<proteinExistence type="inferred from homology"/>
<evidence type="ECO:0000255" key="1">
    <source>
        <dbReference type="HAMAP-Rule" id="MF_01709"/>
    </source>
</evidence>
<feature type="chain" id="PRO_0000092480" description="Maltose/maltodextrin import ATP-binding protein MalK">
    <location>
        <begin position="1"/>
        <end position="31" status="greater than"/>
    </location>
</feature>
<feature type="non-terminal residue">
    <location>
        <position position="31"/>
    </location>
</feature>
<reference key="1">
    <citation type="submission" date="1993-11" db="EMBL/GenBank/DDBJ databases">
        <title>Cloning and sequencing of the MalB regulatory region from Photorhabous inminescens K122.</title>
        <authorList>
            <person name="Clarke D.J."/>
            <person name="Dowds B.C.A."/>
        </authorList>
    </citation>
    <scope>NUCLEOTIDE SEQUENCE [GENOMIC DNA]</scope>
    <source>
        <strain>K122</strain>
    </source>
</reference>
<name>MALK_PHOLU</name>
<dbReference type="EC" id="7.5.2.1" evidence="1"/>
<dbReference type="EMBL" id="X76068">
    <property type="protein sequence ID" value="CAA53669.1"/>
    <property type="molecule type" value="Genomic_DNA"/>
</dbReference>
<dbReference type="PIR" id="S38881">
    <property type="entry name" value="S38881"/>
</dbReference>
<dbReference type="SMR" id="P41124"/>
<dbReference type="STRING" id="29488.KS18_20010"/>
<dbReference type="GO" id="GO:0005886">
    <property type="term" value="C:plasma membrane"/>
    <property type="evidence" value="ECO:0007669"/>
    <property type="project" value="UniProtKB-SubCell"/>
</dbReference>
<dbReference type="GO" id="GO:0015423">
    <property type="term" value="F:ABC-type maltose transporter activity"/>
    <property type="evidence" value="ECO:0007669"/>
    <property type="project" value="UniProtKB-EC"/>
</dbReference>
<dbReference type="GO" id="GO:0005524">
    <property type="term" value="F:ATP binding"/>
    <property type="evidence" value="ECO:0007669"/>
    <property type="project" value="UniProtKB-KW"/>
</dbReference>
<dbReference type="InterPro" id="IPR027417">
    <property type="entry name" value="P-loop_NTPase"/>
</dbReference>
<dbReference type="SUPFAM" id="SSF52540">
    <property type="entry name" value="P-loop containing nucleoside triphosphate hydrolases"/>
    <property type="match status" value="1"/>
</dbReference>
<comment type="function">
    <text evidence="1">Part of the ABC transporter complex MalEFGK involved in maltose/maltodextrin import. Responsible for energy coupling to the transport system.</text>
</comment>
<comment type="catalytic activity">
    <reaction evidence="1">
        <text>D-maltose(out) + ATP + H2O = D-maltose(in) + ADP + phosphate + H(+)</text>
        <dbReference type="Rhea" id="RHEA:22132"/>
        <dbReference type="ChEBI" id="CHEBI:15377"/>
        <dbReference type="ChEBI" id="CHEBI:15378"/>
        <dbReference type="ChEBI" id="CHEBI:17306"/>
        <dbReference type="ChEBI" id="CHEBI:30616"/>
        <dbReference type="ChEBI" id="CHEBI:43474"/>
        <dbReference type="ChEBI" id="CHEBI:456216"/>
        <dbReference type="EC" id="7.5.2.1"/>
    </reaction>
</comment>
<comment type="subunit">
    <text evidence="1">The complex is composed of two ATP-binding proteins (MalK), two transmembrane proteins (MalG and MalK) and a solute-binding protein (MalE).</text>
</comment>
<comment type="subcellular location">
    <subcellularLocation>
        <location evidence="1">Cell inner membrane</location>
        <topology evidence="1">Peripheral membrane protein</topology>
    </subcellularLocation>
</comment>
<comment type="similarity">
    <text evidence="1">Belongs to the ABC transporter superfamily. Maltooligosaccharide importer (TC 3.A.1.1.1) family.</text>
</comment>
<gene>
    <name evidence="1" type="primary">malK</name>
</gene>